<dbReference type="EMBL" id="AF487911">
    <property type="protein sequence ID" value="AAO12205.1"/>
    <property type="molecule type" value="mRNA"/>
</dbReference>
<dbReference type="BMRB" id="P59262"/>
<dbReference type="SMR" id="P59262"/>
<dbReference type="GO" id="GO:0005576">
    <property type="term" value="C:extracellular region"/>
    <property type="evidence" value="ECO:0007669"/>
    <property type="project" value="UniProtKB-SubCell"/>
</dbReference>
<dbReference type="GO" id="GO:0044218">
    <property type="term" value="C:other organism cell membrane"/>
    <property type="evidence" value="ECO:0007669"/>
    <property type="project" value="UniProtKB-KW"/>
</dbReference>
<dbReference type="GO" id="GO:0046930">
    <property type="term" value="C:pore complex"/>
    <property type="evidence" value="ECO:0007669"/>
    <property type="project" value="UniProtKB-KW"/>
</dbReference>
<dbReference type="GO" id="GO:0015288">
    <property type="term" value="F:porin activity"/>
    <property type="evidence" value="ECO:0007669"/>
    <property type="project" value="UniProtKB-KW"/>
</dbReference>
<dbReference type="GO" id="GO:0004860">
    <property type="term" value="F:protein kinase inhibitor activity"/>
    <property type="evidence" value="ECO:0007669"/>
    <property type="project" value="InterPro"/>
</dbReference>
<dbReference type="GO" id="GO:0090729">
    <property type="term" value="F:toxin activity"/>
    <property type="evidence" value="ECO:0007669"/>
    <property type="project" value="UniProtKB-KW"/>
</dbReference>
<dbReference type="GO" id="GO:0031640">
    <property type="term" value="P:killing of cells of another organism"/>
    <property type="evidence" value="ECO:0007669"/>
    <property type="project" value="UniProtKB-KW"/>
</dbReference>
<dbReference type="GO" id="GO:0006811">
    <property type="term" value="P:monoatomic ion transport"/>
    <property type="evidence" value="ECO:0007669"/>
    <property type="project" value="UniProtKB-KW"/>
</dbReference>
<dbReference type="InterPro" id="IPR002116">
    <property type="entry name" value="Melittin/Api_allergen"/>
</dbReference>
<dbReference type="Pfam" id="PF01372">
    <property type="entry name" value="Melittin"/>
    <property type="match status" value="1"/>
</dbReference>
<gene>
    <name type="primary">MELT</name>
</gene>
<sequence length="70" mass="7585">MKFLVNVALVFMVVYISYIYAAPEPEPAPEPEAEADAEADPEAGIGAVLKVLTTGLPALISWIKRKRQQG</sequence>
<feature type="signal peptide" evidence="1">
    <location>
        <begin position="1"/>
        <end position="21"/>
    </location>
</feature>
<feature type="propeptide" id="PRO_0000035152" description="Removed by a dipeptidylpeptidase" evidence="1">
    <location>
        <begin position="22"/>
        <end position="43"/>
    </location>
</feature>
<feature type="peptide" id="PRO_0000035153" description="Melittin" evidence="2">
    <location>
        <begin position="44"/>
        <end position="69"/>
    </location>
</feature>
<feature type="site" description="Important for the flexibility at the center of the helix, flexibility that is important for the stability of the voltage-gated pore" evidence="2">
    <location>
        <position position="57"/>
    </location>
</feature>
<feature type="modified residue" description="N-formylglycine; partial" evidence="2">
    <location>
        <position position="44"/>
    </location>
</feature>
<feature type="modified residue" description="Glutamine amide" evidence="2">
    <location>
        <position position="69"/>
    </location>
</feature>
<evidence type="ECO:0000250" key="1"/>
<evidence type="ECO:0000250" key="2">
    <source>
        <dbReference type="UniProtKB" id="P01501"/>
    </source>
</evidence>
<evidence type="ECO:0000303" key="3">
    <source>
    </source>
</evidence>
<evidence type="ECO:0000305" key="4"/>
<evidence type="ECO:0000305" key="5">
    <source>
    </source>
</evidence>
<comment type="function">
    <text evidence="2">Main toxin of bee venom with strong hemolytic activity and antimicrobial activity. It has enhancing effects on bee venom phospholipase A2 activity. This amphipathic toxin binds to negatively charged membrane surface and forms pore by inserting into lipid bilayers inducing the leakage of ions and molecules and the enhancement of permeability that ultimately leads to cell lysis. It acts as a voltage-gated pore with higher selectivity for anions over cations. The ion conductance has been shown to be voltage-dependent. Self-association of melittin in membranes is promoted by high ionic strength, but not by the presence of negatively charged lipids. In vivo, intradermal injection into healthy human volunteers produce sharp pain sensation and an inflammatory response. It produces pain by activating primary nociceptor cells directly and indirectly due to its ability to activate plasma membrane phospholipase A2 and its pore-forming activity.</text>
</comment>
<comment type="subunit">
    <text evidence="2">Monomer (in solution and for integration into membranes), homotetramer (in solution and potentially as a toroidal pore in membranes), and potenially homomultimer (as a toroidal pore in membranes).</text>
</comment>
<comment type="subcellular location">
    <subcellularLocation>
        <location evidence="5">Secreted</location>
    </subcellularLocation>
    <subcellularLocation>
        <location evidence="2">Target cell membrane</location>
    </subcellularLocation>
    <text evidence="2">Alpha-helical peptides form toroidal pores in the prey.</text>
</comment>
<comment type="tissue specificity">
    <text evidence="5">Expressed by the venom gland.</text>
</comment>
<comment type="allergen">
    <text evidence="2">Causes an allergic reaction in human.</text>
</comment>
<comment type="similarity">
    <text evidence="4">Belongs to the melittin family.</text>
</comment>
<keyword id="KW-0020">Allergen</keyword>
<keyword id="KW-0027">Amidation</keyword>
<keyword id="KW-0929">Antimicrobial</keyword>
<keyword id="KW-0204">Cytolysis</keyword>
<keyword id="KW-0291">Formylation</keyword>
<keyword id="KW-0354">Hemolysis</keyword>
<keyword id="KW-0406">Ion transport</keyword>
<keyword id="KW-0472">Membrane</keyword>
<keyword id="KW-0626">Porin</keyword>
<keyword id="KW-0964">Secreted</keyword>
<keyword id="KW-0732">Signal</keyword>
<keyword id="KW-1052">Target cell membrane</keyword>
<keyword id="KW-1053">Target membrane</keyword>
<keyword id="KW-0800">Toxin</keyword>
<keyword id="KW-0812">Transmembrane</keyword>
<keyword id="KW-0813">Transport</keyword>
<reference key="1">
    <citation type="journal article" date="2003" name="Yi Chuan Xue Bao">
        <title>Cloning and comparative analysis of the venom prepromelittin genes from four wasp species.</title>
        <authorList>
            <person name="Shi W.J."/>
            <person name="Zhang S.F."/>
            <person name="Zhang C.-X."/>
            <person name="Cheng J.A."/>
        </authorList>
    </citation>
    <scope>NUCLEOTIDE SEQUENCE [MRNA]</scope>
    <source>
        <tissue>Venom gland</tissue>
    </source>
</reference>
<accession>P59262</accession>
<organism>
    <name type="scientific">Vespula maculifrons</name>
    <name type="common">Eastern yellow jacket</name>
    <name type="synonym">Wasp</name>
    <dbReference type="NCBI Taxonomy" id="7453"/>
    <lineage>
        <taxon>Eukaryota</taxon>
        <taxon>Metazoa</taxon>
        <taxon>Ecdysozoa</taxon>
        <taxon>Arthropoda</taxon>
        <taxon>Hexapoda</taxon>
        <taxon>Insecta</taxon>
        <taxon>Pterygota</taxon>
        <taxon>Neoptera</taxon>
        <taxon>Endopterygota</taxon>
        <taxon>Hymenoptera</taxon>
        <taxon>Apocrita</taxon>
        <taxon>Aculeata</taxon>
        <taxon>Vespoidea</taxon>
        <taxon>Vespidae</taxon>
        <taxon>Vespinae</taxon>
        <taxon>Vespula</taxon>
    </lineage>
</organism>
<proteinExistence type="inferred from homology"/>
<name>MEL_VESMC</name>
<protein>
    <recommendedName>
        <fullName evidence="3">Melittin</fullName>
        <shortName>MEL</shortName>
        <shortName>MLT</shortName>
    </recommendedName>
</protein>